<keyword id="KW-0963">Cytoplasm</keyword>
<keyword id="KW-1185">Reference proteome</keyword>
<keyword id="KW-0810">Translation regulation</keyword>
<protein>
    <recommendedName>
        <fullName>Polyadenylate-binding protein-interacting protein 1</fullName>
        <shortName>PABP-interacting protein 1</shortName>
        <shortName>PAIP-1</shortName>
        <shortName>Paip1 protein</shortName>
        <shortName>Poly(A)-binding protein-interacting protein 1</shortName>
    </recommendedName>
    <alternativeName>
        <fullName>XlPaip1</fullName>
    </alternativeName>
</protein>
<dbReference type="EMBL" id="BC043861">
    <property type="protein sequence ID" value="AAH43861.1"/>
    <property type="molecule type" value="mRNA"/>
</dbReference>
<dbReference type="EMBL" id="BC123119">
    <property type="protein sequence ID" value="AAI23120.1"/>
    <property type="molecule type" value="mRNA"/>
</dbReference>
<dbReference type="SMR" id="Q7ZYB4"/>
<dbReference type="DNASU" id="380223"/>
<dbReference type="KEGG" id="xla:380223"/>
<dbReference type="AGR" id="Xenbase:XB-GENE-866621"/>
<dbReference type="CTD" id="380223"/>
<dbReference type="Xenbase" id="XB-GENE-866621">
    <property type="gene designation" value="paip1.S"/>
</dbReference>
<dbReference type="OrthoDB" id="8171816at2759"/>
<dbReference type="Proteomes" id="UP000186698">
    <property type="component" value="Chromosome 1S"/>
</dbReference>
<dbReference type="Bgee" id="380223">
    <property type="expression patterns" value="Expressed in ovary and 19 other cell types or tissues"/>
</dbReference>
<dbReference type="GO" id="GO:0005737">
    <property type="term" value="C:cytoplasm"/>
    <property type="evidence" value="ECO:0007669"/>
    <property type="project" value="UniProtKB-SubCell"/>
</dbReference>
<dbReference type="GO" id="GO:0003723">
    <property type="term" value="F:RNA binding"/>
    <property type="evidence" value="ECO:0007669"/>
    <property type="project" value="InterPro"/>
</dbReference>
<dbReference type="GO" id="GO:0008494">
    <property type="term" value="F:translation activator activity"/>
    <property type="evidence" value="ECO:0000250"/>
    <property type="project" value="UniProtKB"/>
</dbReference>
<dbReference type="GO" id="GO:0006446">
    <property type="term" value="P:regulation of translational initiation"/>
    <property type="evidence" value="ECO:0000318"/>
    <property type="project" value="GO_Central"/>
</dbReference>
<dbReference type="FunFam" id="1.25.40.180:FF:000016">
    <property type="entry name" value="polyadenylate-binding protein-interacting protein 1 isoform X1"/>
    <property type="match status" value="1"/>
</dbReference>
<dbReference type="Gene3D" id="1.25.40.180">
    <property type="match status" value="1"/>
</dbReference>
<dbReference type="InterPro" id="IPR016024">
    <property type="entry name" value="ARM-type_fold"/>
</dbReference>
<dbReference type="InterPro" id="IPR003890">
    <property type="entry name" value="MIF4G-like_typ-3"/>
</dbReference>
<dbReference type="InterPro" id="IPR051367">
    <property type="entry name" value="mRNA_TranslReg/HistoneTransl"/>
</dbReference>
<dbReference type="PANTHER" id="PTHR23254">
    <property type="entry name" value="EIF4G DOMAIN PROTEIN"/>
    <property type="match status" value="1"/>
</dbReference>
<dbReference type="PANTHER" id="PTHR23254:SF15">
    <property type="entry name" value="POLYADENYLATE-BINDING PROTEIN-INTERACTING PROTEIN 1"/>
    <property type="match status" value="1"/>
</dbReference>
<dbReference type="Pfam" id="PF02854">
    <property type="entry name" value="MIF4G"/>
    <property type="match status" value="1"/>
</dbReference>
<dbReference type="SMART" id="SM00543">
    <property type="entry name" value="MIF4G"/>
    <property type="match status" value="1"/>
</dbReference>
<dbReference type="SUPFAM" id="SSF48371">
    <property type="entry name" value="ARM repeat"/>
    <property type="match status" value="1"/>
</dbReference>
<comment type="function">
    <text evidence="1">Acts as a coactivator in the regulation of translation initiation of poly(A)-containing mRNAs.</text>
</comment>
<comment type="subunit">
    <text evidence="4">Interacts with the RRM1-RRM2 and C-terminal regions of epabp.</text>
</comment>
<comment type="subcellular location">
    <subcellularLocation>
        <location evidence="1 5">Cytoplasm</location>
    </subcellularLocation>
</comment>
<organism>
    <name type="scientific">Xenopus laevis</name>
    <name type="common">African clawed frog</name>
    <dbReference type="NCBI Taxonomy" id="8355"/>
    <lineage>
        <taxon>Eukaryota</taxon>
        <taxon>Metazoa</taxon>
        <taxon>Chordata</taxon>
        <taxon>Craniata</taxon>
        <taxon>Vertebrata</taxon>
        <taxon>Euteleostomi</taxon>
        <taxon>Amphibia</taxon>
        <taxon>Batrachia</taxon>
        <taxon>Anura</taxon>
        <taxon>Pipoidea</taxon>
        <taxon>Pipidae</taxon>
        <taxon>Xenopodinae</taxon>
        <taxon>Xenopus</taxon>
        <taxon>Xenopus</taxon>
    </lineage>
</organism>
<evidence type="ECO:0000250" key="1">
    <source>
        <dbReference type="UniProtKB" id="Q9H074"/>
    </source>
</evidence>
<evidence type="ECO:0000255" key="2"/>
<evidence type="ECO:0000256" key="3">
    <source>
        <dbReference type="SAM" id="MobiDB-lite"/>
    </source>
</evidence>
<evidence type="ECO:0000269" key="4">
    <source>
    </source>
</evidence>
<evidence type="ECO:0000305" key="5"/>
<evidence type="ECO:0000312" key="6">
    <source>
        <dbReference type="EMBL" id="AAH43861.1"/>
    </source>
</evidence>
<gene>
    <name evidence="1" type="primary">paip1</name>
</gene>
<accession>Q7ZYB4</accession>
<accession>Q0IHK4</accession>
<name>PAIP1_XENLA</name>
<feature type="chain" id="PRO_0000233952" description="Polyadenylate-binding protein-interacting protein 1">
    <location>
        <begin position="1"/>
        <end position="463"/>
    </location>
</feature>
<feature type="domain" description="MIF4G" evidence="2">
    <location>
        <begin position="145"/>
        <end position="362"/>
    </location>
</feature>
<feature type="region of interest" description="Disordered" evidence="3">
    <location>
        <begin position="1"/>
        <end position="86"/>
    </location>
</feature>
<feature type="region of interest" description="Disordered" evidence="3">
    <location>
        <begin position="420"/>
        <end position="442"/>
    </location>
</feature>
<feature type="compositionally biased region" description="Acidic residues" evidence="3">
    <location>
        <begin position="433"/>
        <end position="442"/>
    </location>
</feature>
<proteinExistence type="evidence at protein level"/>
<sequence length="463" mass="51223">MSDGFERAPGVGRGRGRGRGIETAEGGKTPGFSGASGAGDEPGRAKAAGSQQQEPLRPPRTGPPGGGGDAGAAQTSHKRTSPAAQLPAHTYTMAVSKAQPADRGRLLSNLSANAAEFYPSGYSVEANNCVEENGCYPVLPEGTLTEYVQDFLNHLTEQPGSFEAEVFPFSDVLNNCVTTDESLQELVELIYQQAISVPNFSYTGARLCNYLSNNLHINPQNQNFRQLLLKRCQTEFEKRDQAAKGDGAARKQFHAFVLFLGELYLNLEIKGAKGQVTRAEILQSGLQELLNSLFSNPVDDNLMCAVKLLKLTGSVLEDAWKEKALSCMEEVMLRMKNVVLDANCSRDVKQMLLKLVELRSSNWGRVHAASTFKEATPENDPNYFMNEPTFYTSEGVPFTAADPDYQEKYQELLDREDFFRDYDENGTDGGDSYFEDDDDNEMDPEMEEAYEKFCLESEHKKKQ</sequence>
<reference evidence="6" key="1">
    <citation type="submission" date="2006-09" db="EMBL/GenBank/DDBJ databases">
        <authorList>
            <consortium name="NIH - Xenopus Gene Collection (XGC) project"/>
        </authorList>
    </citation>
    <scope>NUCLEOTIDE SEQUENCE [LARGE SCALE MRNA]</scope>
    <source>
        <tissue evidence="6">Embryo</tissue>
        <tissue>Fat body</tissue>
    </source>
</reference>
<reference evidence="5" key="2">
    <citation type="journal article" date="2005" name="Mol. Cell. Biol.">
        <title>Embryonic poly(A)-binding protein stimulates translation in germ cells.</title>
        <authorList>
            <person name="Wilkie G.S."/>
            <person name="Gautier P."/>
            <person name="Lawson D."/>
            <person name="Gray N.K."/>
        </authorList>
    </citation>
    <scope>INTERACTION WITH EPABP</scope>
</reference>